<name>YOJA_BACSU</name>
<accession>O31862</accession>
<keyword id="KW-1003">Cell membrane</keyword>
<keyword id="KW-0472">Membrane</keyword>
<keyword id="KW-1185">Reference proteome</keyword>
<keyword id="KW-0812">Transmembrane</keyword>
<keyword id="KW-1133">Transmembrane helix</keyword>
<keyword id="KW-0813">Transport</keyword>
<proteinExistence type="inferred from homology"/>
<evidence type="ECO:0000255" key="1"/>
<evidence type="ECO:0000305" key="2"/>
<dbReference type="EMBL" id="AF026147">
    <property type="protein sequence ID" value="AAC17849.1"/>
    <property type="molecule type" value="Genomic_DNA"/>
</dbReference>
<dbReference type="EMBL" id="AL009126">
    <property type="protein sequence ID" value="CAB13843.1"/>
    <property type="molecule type" value="Genomic_DNA"/>
</dbReference>
<dbReference type="PIR" id="G69905">
    <property type="entry name" value="G69905"/>
</dbReference>
<dbReference type="RefSeq" id="NP_389833.1">
    <property type="nucleotide sequence ID" value="NC_000964.3"/>
</dbReference>
<dbReference type="RefSeq" id="WP_003231203.1">
    <property type="nucleotide sequence ID" value="NZ_OZ025638.1"/>
</dbReference>
<dbReference type="SMR" id="O31862"/>
<dbReference type="FunCoup" id="O31862">
    <property type="interactions" value="98"/>
</dbReference>
<dbReference type="STRING" id="224308.BSU19520"/>
<dbReference type="PaxDb" id="224308-BSU19520"/>
<dbReference type="DNASU" id="939510"/>
<dbReference type="EnsemblBacteria" id="CAB13843">
    <property type="protein sequence ID" value="CAB13843"/>
    <property type="gene ID" value="BSU_19520"/>
</dbReference>
<dbReference type="GeneID" id="939510"/>
<dbReference type="KEGG" id="bsu:BSU19520"/>
<dbReference type="PATRIC" id="fig|224308.179.peg.2134"/>
<dbReference type="eggNOG" id="COG2610">
    <property type="taxonomic scope" value="Bacteria"/>
</dbReference>
<dbReference type="InParanoid" id="O31862"/>
<dbReference type="OrthoDB" id="9787129at2"/>
<dbReference type="PhylomeDB" id="O31862"/>
<dbReference type="BioCyc" id="BSUB:BSU19520-MONOMER"/>
<dbReference type="Proteomes" id="UP000001570">
    <property type="component" value="Chromosome"/>
</dbReference>
<dbReference type="GO" id="GO:0005886">
    <property type="term" value="C:plasma membrane"/>
    <property type="evidence" value="ECO:0000318"/>
    <property type="project" value="GO_Central"/>
</dbReference>
<dbReference type="GO" id="GO:0015128">
    <property type="term" value="F:gluconate transmembrane transporter activity"/>
    <property type="evidence" value="ECO:0000318"/>
    <property type="project" value="GO_Central"/>
</dbReference>
<dbReference type="GO" id="GO:0035429">
    <property type="term" value="P:gluconate transmembrane transport"/>
    <property type="evidence" value="ECO:0000318"/>
    <property type="project" value="GO_Central"/>
</dbReference>
<dbReference type="InterPro" id="IPR003474">
    <property type="entry name" value="Glcn_transporter"/>
</dbReference>
<dbReference type="NCBIfam" id="TIGR00791">
    <property type="entry name" value="gntP"/>
    <property type="match status" value="1"/>
</dbReference>
<dbReference type="PANTHER" id="PTHR30354">
    <property type="entry name" value="GNT FAMILY GLUCONATE TRANSPORTER"/>
    <property type="match status" value="1"/>
</dbReference>
<dbReference type="PANTHER" id="PTHR30354:SF22">
    <property type="entry name" value="HIGH-AFFINITY GLUCONATE TRANSPORTER"/>
    <property type="match status" value="1"/>
</dbReference>
<dbReference type="Pfam" id="PF02447">
    <property type="entry name" value="GntP_permease"/>
    <property type="match status" value="1"/>
</dbReference>
<dbReference type="PIRSF" id="PIRSF002746">
    <property type="entry name" value="Gluconate_transporter"/>
    <property type="match status" value="1"/>
</dbReference>
<comment type="subcellular location">
    <subcellularLocation>
        <location evidence="2">Cell membrane</location>
        <topology evidence="2">Multi-pass membrane protein</topology>
    </subcellularLocation>
</comment>
<comment type="similarity">
    <text evidence="2">Belongs to the GntP permease family.</text>
</comment>
<gene>
    <name type="primary">yojA</name>
    <name type="ordered locus">BSU19520</name>
</gene>
<sequence length="444" mass="46808">MPILIVAVGVLILLFLIIKVKLNTFVSLIVVSFLVAIGLGMDINKIVLSIETGIGGQLGHLALVFGLGAMLGRLVSDAGGGYRIAITLIDKFGRKRIQAAVVVASFIIGIALFFEVGLVLLIPIVYAIAKELKMPFLYLGIPMAAALNVTHGFLPPHPAPTAISVAYGAHIGQVLLFGIIIAVPTTVIAGPLFNKFAMKRFPGAYQKHGNLSGLGPRKEFQLDETPGFAISAVTSLFPVIFMAMATIFSLLLSEHSKGKDIIEFIGTPGTAMLISLLLALYTMGYARKISMQEIGRSISESISQIAMMLLIIGGGGAFKQVLIDGGVGDYVADFFRQTNMSPLFVAWTIAAVLRLCLGSATVAALTTAGMAAPLMEAGSVNPALMVLATGAGSVIACHVNDAGFWMVKEFFGLSMKETFQTWTLLTTVLSVTGLGCVLLAGLVM</sequence>
<organism>
    <name type="scientific">Bacillus subtilis (strain 168)</name>
    <dbReference type="NCBI Taxonomy" id="224308"/>
    <lineage>
        <taxon>Bacteria</taxon>
        <taxon>Bacillati</taxon>
        <taxon>Bacillota</taxon>
        <taxon>Bacilli</taxon>
        <taxon>Bacillales</taxon>
        <taxon>Bacillaceae</taxon>
        <taxon>Bacillus</taxon>
    </lineage>
</organism>
<feature type="chain" id="PRO_0000061946" description="Uncharacterized permease YojA">
    <location>
        <begin position="1"/>
        <end position="444"/>
    </location>
</feature>
<feature type="transmembrane region" description="Helical" evidence="1">
    <location>
        <begin position="2"/>
        <end position="22"/>
    </location>
</feature>
<feature type="transmembrane region" description="Helical" evidence="1">
    <location>
        <begin position="24"/>
        <end position="44"/>
    </location>
</feature>
<feature type="transmembrane region" description="Helical" evidence="1">
    <location>
        <begin position="52"/>
        <end position="72"/>
    </location>
</feature>
<feature type="transmembrane region" description="Helical" evidence="1">
    <location>
        <begin position="106"/>
        <end position="126"/>
    </location>
</feature>
<feature type="transmembrane region" description="Helical" evidence="1">
    <location>
        <begin position="134"/>
        <end position="154"/>
    </location>
</feature>
<feature type="transmembrane region" description="Helical" evidence="1">
    <location>
        <begin position="174"/>
        <end position="194"/>
    </location>
</feature>
<feature type="transmembrane region" description="Helical" evidence="1">
    <location>
        <begin position="228"/>
        <end position="248"/>
    </location>
</feature>
<feature type="transmembrane region" description="Helical" evidence="1">
    <location>
        <begin position="261"/>
        <end position="281"/>
    </location>
</feature>
<feature type="transmembrane region" description="Helical" evidence="1">
    <location>
        <begin position="305"/>
        <end position="325"/>
    </location>
</feature>
<feature type="transmembrane region" description="Helical" evidence="1">
    <location>
        <begin position="343"/>
        <end position="363"/>
    </location>
</feature>
<feature type="transmembrane region" description="Helical" evidence="1">
    <location>
        <begin position="377"/>
        <end position="397"/>
    </location>
</feature>
<feature type="transmembrane region" description="Helical" evidence="1">
    <location>
        <begin position="424"/>
        <end position="444"/>
    </location>
</feature>
<protein>
    <recommendedName>
        <fullName>Uncharacterized permease YojA</fullName>
    </recommendedName>
</protein>
<reference key="1">
    <citation type="journal article" date="1998" name="DNA Res.">
        <title>Sequence analysis of the Bacillus subtilis 168 chromosome region between the sspC and odhA loci (184 degrees-180 degrees).</title>
        <authorList>
            <person name="Ghim S.-Y."/>
            <person name="Choi S.-K."/>
            <person name="Shin B.-S."/>
            <person name="Jeong Y.-M."/>
            <person name="Sorokin A."/>
            <person name="Ehrlich S.D."/>
            <person name="Park S.-H."/>
        </authorList>
    </citation>
    <scope>NUCLEOTIDE SEQUENCE [GENOMIC DNA]</scope>
    <source>
        <strain>168</strain>
    </source>
</reference>
<reference key="2">
    <citation type="journal article" date="1997" name="Nature">
        <title>The complete genome sequence of the Gram-positive bacterium Bacillus subtilis.</title>
        <authorList>
            <person name="Kunst F."/>
            <person name="Ogasawara N."/>
            <person name="Moszer I."/>
            <person name="Albertini A.M."/>
            <person name="Alloni G."/>
            <person name="Azevedo V."/>
            <person name="Bertero M.G."/>
            <person name="Bessieres P."/>
            <person name="Bolotin A."/>
            <person name="Borchert S."/>
            <person name="Borriss R."/>
            <person name="Boursier L."/>
            <person name="Brans A."/>
            <person name="Braun M."/>
            <person name="Brignell S.C."/>
            <person name="Bron S."/>
            <person name="Brouillet S."/>
            <person name="Bruschi C.V."/>
            <person name="Caldwell B."/>
            <person name="Capuano V."/>
            <person name="Carter N.M."/>
            <person name="Choi S.-K."/>
            <person name="Codani J.-J."/>
            <person name="Connerton I.F."/>
            <person name="Cummings N.J."/>
            <person name="Daniel R.A."/>
            <person name="Denizot F."/>
            <person name="Devine K.M."/>
            <person name="Duesterhoeft A."/>
            <person name="Ehrlich S.D."/>
            <person name="Emmerson P.T."/>
            <person name="Entian K.-D."/>
            <person name="Errington J."/>
            <person name="Fabret C."/>
            <person name="Ferrari E."/>
            <person name="Foulger D."/>
            <person name="Fritz C."/>
            <person name="Fujita M."/>
            <person name="Fujita Y."/>
            <person name="Fuma S."/>
            <person name="Galizzi A."/>
            <person name="Galleron N."/>
            <person name="Ghim S.-Y."/>
            <person name="Glaser P."/>
            <person name="Goffeau A."/>
            <person name="Golightly E.J."/>
            <person name="Grandi G."/>
            <person name="Guiseppi G."/>
            <person name="Guy B.J."/>
            <person name="Haga K."/>
            <person name="Haiech J."/>
            <person name="Harwood C.R."/>
            <person name="Henaut A."/>
            <person name="Hilbert H."/>
            <person name="Holsappel S."/>
            <person name="Hosono S."/>
            <person name="Hullo M.-F."/>
            <person name="Itaya M."/>
            <person name="Jones L.-M."/>
            <person name="Joris B."/>
            <person name="Karamata D."/>
            <person name="Kasahara Y."/>
            <person name="Klaerr-Blanchard M."/>
            <person name="Klein C."/>
            <person name="Kobayashi Y."/>
            <person name="Koetter P."/>
            <person name="Koningstein G."/>
            <person name="Krogh S."/>
            <person name="Kumano M."/>
            <person name="Kurita K."/>
            <person name="Lapidus A."/>
            <person name="Lardinois S."/>
            <person name="Lauber J."/>
            <person name="Lazarevic V."/>
            <person name="Lee S.-M."/>
            <person name="Levine A."/>
            <person name="Liu H."/>
            <person name="Masuda S."/>
            <person name="Mauel C."/>
            <person name="Medigue C."/>
            <person name="Medina N."/>
            <person name="Mellado R.P."/>
            <person name="Mizuno M."/>
            <person name="Moestl D."/>
            <person name="Nakai S."/>
            <person name="Noback M."/>
            <person name="Noone D."/>
            <person name="O'Reilly M."/>
            <person name="Ogawa K."/>
            <person name="Ogiwara A."/>
            <person name="Oudega B."/>
            <person name="Park S.-H."/>
            <person name="Parro V."/>
            <person name="Pohl T.M."/>
            <person name="Portetelle D."/>
            <person name="Porwollik S."/>
            <person name="Prescott A.M."/>
            <person name="Presecan E."/>
            <person name="Pujic P."/>
            <person name="Purnelle B."/>
            <person name="Rapoport G."/>
            <person name="Rey M."/>
            <person name="Reynolds S."/>
            <person name="Rieger M."/>
            <person name="Rivolta C."/>
            <person name="Rocha E."/>
            <person name="Roche B."/>
            <person name="Rose M."/>
            <person name="Sadaie Y."/>
            <person name="Sato T."/>
            <person name="Scanlan E."/>
            <person name="Schleich S."/>
            <person name="Schroeter R."/>
            <person name="Scoffone F."/>
            <person name="Sekiguchi J."/>
            <person name="Sekowska A."/>
            <person name="Seror S.J."/>
            <person name="Serror P."/>
            <person name="Shin B.-S."/>
            <person name="Soldo B."/>
            <person name="Sorokin A."/>
            <person name="Tacconi E."/>
            <person name="Takagi T."/>
            <person name="Takahashi H."/>
            <person name="Takemaru K."/>
            <person name="Takeuchi M."/>
            <person name="Tamakoshi A."/>
            <person name="Tanaka T."/>
            <person name="Terpstra P."/>
            <person name="Tognoni A."/>
            <person name="Tosato V."/>
            <person name="Uchiyama S."/>
            <person name="Vandenbol M."/>
            <person name="Vannier F."/>
            <person name="Vassarotti A."/>
            <person name="Viari A."/>
            <person name="Wambutt R."/>
            <person name="Wedler E."/>
            <person name="Wedler H."/>
            <person name="Weitzenegger T."/>
            <person name="Winters P."/>
            <person name="Wipat A."/>
            <person name="Yamamoto H."/>
            <person name="Yamane K."/>
            <person name="Yasumoto K."/>
            <person name="Yata K."/>
            <person name="Yoshida K."/>
            <person name="Yoshikawa H.-F."/>
            <person name="Zumstein E."/>
            <person name="Yoshikawa H."/>
            <person name="Danchin A."/>
        </authorList>
    </citation>
    <scope>NUCLEOTIDE SEQUENCE [LARGE SCALE GENOMIC DNA]</scope>
    <source>
        <strain>168</strain>
    </source>
</reference>